<name>MTBC3_METMA</name>
<comment type="function">
    <text evidence="1">Acts as a methyl group carrier between MtbB and MtbA.</text>
</comment>
<comment type="pathway">
    <text>One-carbon metabolism; methanogenesis from dimethylamine.</text>
</comment>
<comment type="similarity">
    <text evidence="4">Belongs to the methylamine corrinoid protein family.</text>
</comment>
<organism>
    <name type="scientific">Methanosarcina mazei (strain ATCC BAA-159 / DSM 3647 / Goe1 / Go1 / JCM 11833 / OCM 88)</name>
    <name type="common">Methanosarcina frisia</name>
    <dbReference type="NCBI Taxonomy" id="192952"/>
    <lineage>
        <taxon>Archaea</taxon>
        <taxon>Methanobacteriati</taxon>
        <taxon>Methanobacteriota</taxon>
        <taxon>Stenosarchaea group</taxon>
        <taxon>Methanomicrobia</taxon>
        <taxon>Methanosarcinales</taxon>
        <taxon>Methanosarcinaceae</taxon>
        <taxon>Methanosarcina</taxon>
    </lineage>
</organism>
<protein>
    <recommendedName>
        <fullName>Dimethylamine corrinoid protein 3</fullName>
    </recommendedName>
</protein>
<proteinExistence type="inferred from homology"/>
<feature type="chain" id="PRO_0000216480" description="Dimethylamine corrinoid protein 3">
    <location>
        <begin position="1"/>
        <end position="167"/>
    </location>
</feature>
<feature type="domain" description="B12-binding N-terminal" evidence="3">
    <location>
        <begin position="1"/>
        <end position="44"/>
    </location>
</feature>
<feature type="domain" description="B12-binding" evidence="2">
    <location>
        <begin position="45"/>
        <end position="167"/>
    </location>
</feature>
<feature type="binding site" description="axial binding residue" evidence="1">
    <location>
        <position position="58"/>
    </location>
    <ligand>
        <name>methylcob(III)alamin</name>
        <dbReference type="ChEBI" id="CHEBI:28115"/>
    </ligand>
    <ligandPart>
        <name>Co</name>
        <dbReference type="ChEBI" id="CHEBI:27638"/>
    </ligandPart>
</feature>
<gene>
    <name type="primary">mtbC3</name>
    <name type="ordered locus">MM_1687</name>
</gene>
<dbReference type="EMBL" id="AE008384">
    <property type="protein sequence ID" value="AAM31383.1"/>
    <property type="molecule type" value="Genomic_DNA"/>
</dbReference>
<dbReference type="SMR" id="P58981"/>
<dbReference type="KEGG" id="mma:MM_1687"/>
<dbReference type="PATRIC" id="fig|192952.21.peg.1956"/>
<dbReference type="eggNOG" id="arCOG02030">
    <property type="taxonomic scope" value="Archaea"/>
</dbReference>
<dbReference type="HOGENOM" id="CLU_082102_1_0_2"/>
<dbReference type="UniPathway" id="UPA00644"/>
<dbReference type="Proteomes" id="UP000000595">
    <property type="component" value="Chromosome"/>
</dbReference>
<dbReference type="GO" id="GO:0005829">
    <property type="term" value="C:cytosol"/>
    <property type="evidence" value="ECO:0007669"/>
    <property type="project" value="TreeGrafter"/>
</dbReference>
<dbReference type="GO" id="GO:0031419">
    <property type="term" value="F:cobalamin binding"/>
    <property type="evidence" value="ECO:0007669"/>
    <property type="project" value="InterPro"/>
</dbReference>
<dbReference type="GO" id="GO:0050897">
    <property type="term" value="F:cobalt ion binding"/>
    <property type="evidence" value="ECO:0007669"/>
    <property type="project" value="InterPro"/>
</dbReference>
<dbReference type="GO" id="GO:0008705">
    <property type="term" value="F:methionine synthase activity"/>
    <property type="evidence" value="ECO:0007669"/>
    <property type="project" value="TreeGrafter"/>
</dbReference>
<dbReference type="GO" id="GO:0050667">
    <property type="term" value="P:homocysteine metabolic process"/>
    <property type="evidence" value="ECO:0007669"/>
    <property type="project" value="TreeGrafter"/>
</dbReference>
<dbReference type="GO" id="GO:0015948">
    <property type="term" value="P:methanogenesis"/>
    <property type="evidence" value="ECO:0007669"/>
    <property type="project" value="UniProtKB-KW"/>
</dbReference>
<dbReference type="GO" id="GO:0046653">
    <property type="term" value="P:tetrahydrofolate metabolic process"/>
    <property type="evidence" value="ECO:0007669"/>
    <property type="project" value="TreeGrafter"/>
</dbReference>
<dbReference type="CDD" id="cd02070">
    <property type="entry name" value="corrinoid_protein_B12-BD"/>
    <property type="match status" value="1"/>
</dbReference>
<dbReference type="FunFam" id="3.40.50.280:FF:000003">
    <property type="entry name" value="Dimethylamine methyltransferase corrinoid protein"/>
    <property type="match status" value="1"/>
</dbReference>
<dbReference type="Gene3D" id="3.40.50.280">
    <property type="entry name" value="Cobalamin-binding domain"/>
    <property type="match status" value="1"/>
</dbReference>
<dbReference type="Gene3D" id="1.10.1240.10">
    <property type="entry name" value="Methionine synthase domain"/>
    <property type="match status" value="1"/>
</dbReference>
<dbReference type="InterPro" id="IPR003759">
    <property type="entry name" value="Cbl-bd_cap"/>
</dbReference>
<dbReference type="InterPro" id="IPR006158">
    <property type="entry name" value="Cobalamin-bd"/>
</dbReference>
<dbReference type="InterPro" id="IPR036724">
    <property type="entry name" value="Cobalamin-bd_sf"/>
</dbReference>
<dbReference type="InterPro" id="IPR012741">
    <property type="entry name" value="Corrinoid_p"/>
</dbReference>
<dbReference type="InterPro" id="IPR050554">
    <property type="entry name" value="Met_Synthase/Corrinoid"/>
</dbReference>
<dbReference type="InterPro" id="IPR036594">
    <property type="entry name" value="Meth_synthase_dom"/>
</dbReference>
<dbReference type="NCBIfam" id="TIGR02370">
    <property type="entry name" value="pyl_corrinoid"/>
    <property type="match status" value="1"/>
</dbReference>
<dbReference type="PANTHER" id="PTHR45833">
    <property type="entry name" value="METHIONINE SYNTHASE"/>
    <property type="match status" value="1"/>
</dbReference>
<dbReference type="PANTHER" id="PTHR45833:SF1">
    <property type="entry name" value="METHIONINE SYNTHASE"/>
    <property type="match status" value="1"/>
</dbReference>
<dbReference type="Pfam" id="PF02310">
    <property type="entry name" value="B12-binding"/>
    <property type="match status" value="1"/>
</dbReference>
<dbReference type="Pfam" id="PF02607">
    <property type="entry name" value="B12-binding_2"/>
    <property type="match status" value="1"/>
</dbReference>
<dbReference type="SUPFAM" id="SSF52242">
    <property type="entry name" value="Cobalamin (vitamin B12)-binding domain"/>
    <property type="match status" value="1"/>
</dbReference>
<dbReference type="PROSITE" id="PS51332">
    <property type="entry name" value="B12_BINDING"/>
    <property type="match status" value="1"/>
</dbReference>
<dbReference type="PROSITE" id="PS51337">
    <property type="entry name" value="B12_BINDING_NTER"/>
    <property type="match status" value="1"/>
</dbReference>
<reference key="1">
    <citation type="journal article" date="2002" name="J. Mol. Microbiol. Biotechnol.">
        <title>The genome of Methanosarcina mazei: evidence for lateral gene transfer between Bacteria and Archaea.</title>
        <authorList>
            <person name="Deppenmeier U."/>
            <person name="Johann A."/>
            <person name="Hartsch T."/>
            <person name="Merkl R."/>
            <person name="Schmitz R.A."/>
            <person name="Martinez-Arias R."/>
            <person name="Henne A."/>
            <person name="Wiezer A."/>
            <person name="Baeumer S."/>
            <person name="Jacobi C."/>
            <person name="Brueggemann H."/>
            <person name="Lienard T."/>
            <person name="Christmann A."/>
            <person name="Boemecke M."/>
            <person name="Steckel S."/>
            <person name="Bhattacharyya A."/>
            <person name="Lykidis A."/>
            <person name="Overbeek R."/>
            <person name="Klenk H.-P."/>
            <person name="Gunsalus R.P."/>
            <person name="Fritz H.-J."/>
            <person name="Gottschalk G."/>
        </authorList>
    </citation>
    <scope>NUCLEOTIDE SEQUENCE [LARGE SCALE GENOMIC DNA]</scope>
    <source>
        <strain>ATCC BAA-159 / DSM 3647 / Goe1 / Go1 / JCM 11833 / OCM 88</strain>
    </source>
</reference>
<sequence>MNEVGVRFERGKLFLPHVMMAADAMTAGVNALKDLMPEGSASSKMGVIVNGTVEGDVHDIGKSIVSTMLQSAGFEVHDIGRDVPIRNFIEKAKEVNADMIGLSALMTTTLPGQRDVIELLKEEGLRDKVKVMIGGAPATQAWADKIGADCYAENASEAVTKAKELLA</sequence>
<accession>P58981</accession>
<evidence type="ECO:0000250" key="1"/>
<evidence type="ECO:0000255" key="2">
    <source>
        <dbReference type="PROSITE-ProRule" id="PRU00666"/>
    </source>
</evidence>
<evidence type="ECO:0000255" key="3">
    <source>
        <dbReference type="PROSITE-ProRule" id="PRU00667"/>
    </source>
</evidence>
<evidence type="ECO:0000305" key="4"/>
<keyword id="KW-0170">Cobalt</keyword>
<keyword id="KW-0479">Metal-binding</keyword>
<keyword id="KW-0484">Methanogenesis</keyword>
<keyword id="KW-0677">Repeat</keyword>